<organism>
    <name type="scientific">Mycobacterium avium (strain 104)</name>
    <dbReference type="NCBI Taxonomy" id="243243"/>
    <lineage>
        <taxon>Bacteria</taxon>
        <taxon>Bacillati</taxon>
        <taxon>Actinomycetota</taxon>
        <taxon>Actinomycetes</taxon>
        <taxon>Mycobacteriales</taxon>
        <taxon>Mycobacteriaceae</taxon>
        <taxon>Mycobacterium</taxon>
        <taxon>Mycobacterium avium complex (MAC)</taxon>
    </lineage>
</organism>
<accession>A0QGE9</accession>
<dbReference type="EMBL" id="CP000479">
    <property type="protein sequence ID" value="ABK68121.1"/>
    <property type="molecule type" value="Genomic_DNA"/>
</dbReference>
<dbReference type="RefSeq" id="WP_011725055.1">
    <property type="nucleotide sequence ID" value="NC_008595.1"/>
</dbReference>
<dbReference type="SMR" id="A0QGE9"/>
<dbReference type="KEGG" id="mav:MAV_2800"/>
<dbReference type="HOGENOM" id="CLU_030805_9_2_11"/>
<dbReference type="Proteomes" id="UP000001574">
    <property type="component" value="Chromosome"/>
</dbReference>
<dbReference type="CDD" id="cd00885">
    <property type="entry name" value="cinA"/>
    <property type="match status" value="1"/>
</dbReference>
<dbReference type="Gene3D" id="3.90.950.20">
    <property type="entry name" value="CinA-like"/>
    <property type="match status" value="1"/>
</dbReference>
<dbReference type="Gene3D" id="3.40.980.10">
    <property type="entry name" value="MoaB/Mog-like domain"/>
    <property type="match status" value="1"/>
</dbReference>
<dbReference type="HAMAP" id="MF_00226_B">
    <property type="entry name" value="CinA_B"/>
    <property type="match status" value="1"/>
</dbReference>
<dbReference type="InterPro" id="IPR050101">
    <property type="entry name" value="CinA"/>
</dbReference>
<dbReference type="InterPro" id="IPR036653">
    <property type="entry name" value="CinA-like_C"/>
</dbReference>
<dbReference type="InterPro" id="IPR008136">
    <property type="entry name" value="CinA_C"/>
</dbReference>
<dbReference type="InterPro" id="IPR008135">
    <property type="entry name" value="Competence-induced_CinA"/>
</dbReference>
<dbReference type="InterPro" id="IPR036425">
    <property type="entry name" value="MoaB/Mog-like_dom_sf"/>
</dbReference>
<dbReference type="InterPro" id="IPR001453">
    <property type="entry name" value="MoaB/Mog_dom"/>
</dbReference>
<dbReference type="NCBIfam" id="TIGR00200">
    <property type="entry name" value="cinA_nterm"/>
    <property type="match status" value="1"/>
</dbReference>
<dbReference type="NCBIfam" id="TIGR00199">
    <property type="entry name" value="PncC_domain"/>
    <property type="match status" value="1"/>
</dbReference>
<dbReference type="NCBIfam" id="NF001813">
    <property type="entry name" value="PRK00549.1"/>
    <property type="match status" value="1"/>
</dbReference>
<dbReference type="PANTHER" id="PTHR13939">
    <property type="entry name" value="NICOTINAMIDE-NUCLEOTIDE AMIDOHYDROLASE PNCC"/>
    <property type="match status" value="1"/>
</dbReference>
<dbReference type="PANTHER" id="PTHR13939:SF0">
    <property type="entry name" value="NMN AMIDOHYDROLASE-LIKE PROTEIN YFAY"/>
    <property type="match status" value="1"/>
</dbReference>
<dbReference type="Pfam" id="PF02464">
    <property type="entry name" value="CinA"/>
    <property type="match status" value="1"/>
</dbReference>
<dbReference type="Pfam" id="PF00994">
    <property type="entry name" value="MoCF_biosynth"/>
    <property type="match status" value="1"/>
</dbReference>
<dbReference type="PIRSF" id="PIRSF006728">
    <property type="entry name" value="CinA"/>
    <property type="match status" value="1"/>
</dbReference>
<dbReference type="SMART" id="SM00852">
    <property type="entry name" value="MoCF_biosynth"/>
    <property type="match status" value="1"/>
</dbReference>
<dbReference type="SUPFAM" id="SSF142433">
    <property type="entry name" value="CinA-like"/>
    <property type="match status" value="1"/>
</dbReference>
<dbReference type="SUPFAM" id="SSF53218">
    <property type="entry name" value="Molybdenum cofactor biosynthesis proteins"/>
    <property type="match status" value="1"/>
</dbReference>
<reference key="1">
    <citation type="submission" date="2006-10" db="EMBL/GenBank/DDBJ databases">
        <authorList>
            <person name="Fleischmann R.D."/>
            <person name="Dodson R.J."/>
            <person name="Haft D.H."/>
            <person name="Merkel J.S."/>
            <person name="Nelson W.C."/>
            <person name="Fraser C.M."/>
        </authorList>
    </citation>
    <scope>NUCLEOTIDE SEQUENCE [LARGE SCALE GENOMIC DNA]</scope>
    <source>
        <strain>104</strain>
    </source>
</reference>
<gene>
    <name type="ordered locus">MAV_2800</name>
</gene>
<protein>
    <recommendedName>
        <fullName evidence="1">CinA-like protein</fullName>
    </recommendedName>
</protein>
<proteinExistence type="inferred from homology"/>
<feature type="chain" id="PRO_1000058714" description="CinA-like protein">
    <location>
        <begin position="1"/>
        <end position="434"/>
    </location>
</feature>
<sequence>MPVSARAGIVVTGTEVLTGRVQDANGPWIADRLLELGVELAHITICGDRPHDIEAQLRFLADQGVDLIVTSGGLGPTADDMTVEVVARFCGRELVLDAEVEEKIANILKKLMARNPAFQSALDPGTFESLRAANRKQAMVPAGAQVLDPVGTAPGVVVPGKPAVIVLPGPPRELQPMWHTAIQTPAAQQAIAGRTVYRQEMLRMFGLPESGLAETLREAEAAVPGFGQLEITTCLRRGEIEMVTRYEPTAATAYAQLTKLLRDKHGDQLYSEDGSRVDDLVARLLAGRRIATAESCTAGLLAARLTDRPGSSDYVAGGVVAYSNEAKAELLGVDPALIETHGAVSEPVAQAMAAGARQRFAADTAVAITGIAGPGGGTEEKPVGTVCFSVQVGPPGATARSDTRTLRLPGNRLDIRERSTTVAMHLLRRLLTDA</sequence>
<name>CINAL_MYCA1</name>
<evidence type="ECO:0000255" key="1">
    <source>
        <dbReference type="HAMAP-Rule" id="MF_00226"/>
    </source>
</evidence>
<comment type="similarity">
    <text evidence="1">Belongs to the CinA family.</text>
</comment>